<keyword id="KW-0068">Autocatalytic cleavage</keyword>
<keyword id="KW-0227">DNA damage</keyword>
<keyword id="KW-0234">DNA repair</keyword>
<keyword id="KW-0235">DNA replication</keyword>
<keyword id="KW-0238">DNA-binding</keyword>
<keyword id="KW-0378">Hydrolase</keyword>
<keyword id="KW-1185">Reference proteome</keyword>
<keyword id="KW-0678">Repressor</keyword>
<keyword id="KW-0742">SOS response</keyword>
<keyword id="KW-0804">Transcription</keyword>
<keyword id="KW-0805">Transcription regulation</keyword>
<sequence>MYKLTTRQQEVLDLIKSHIEDTGYPPTRAEIANQLGFRSANAAEEHLKALARKGAIEMVPGASRGIRLPETIQGIPLIGRVAAGNPILAEQNIEDYCDVPPDFFYPQANYLLKVQGMSMRDAGILDGDLLAVHSTTQVKNGDIVVARIEDEVTVKRFKRERNNATIQLLPENPDFNIIEVDLRDANFSIEGLSVGIIRREL</sequence>
<accession>Q21JT2</accession>
<feature type="chain" id="PRO_1000001331" description="LexA repressor">
    <location>
        <begin position="1"/>
        <end position="201"/>
    </location>
</feature>
<feature type="DNA-binding region" description="H-T-H motif" evidence="1">
    <location>
        <begin position="28"/>
        <end position="48"/>
    </location>
</feature>
<feature type="active site" description="For autocatalytic cleavage activity" evidence="1">
    <location>
        <position position="118"/>
    </location>
</feature>
<feature type="active site" description="For autocatalytic cleavage activity" evidence="1">
    <location>
        <position position="155"/>
    </location>
</feature>
<feature type="site" description="Cleavage; by autolysis" evidence="1">
    <location>
        <begin position="83"/>
        <end position="84"/>
    </location>
</feature>
<gene>
    <name evidence="1" type="primary">lexA</name>
    <name type="ordered locus">Sde_1787</name>
</gene>
<name>LEXA_SACD2</name>
<evidence type="ECO:0000255" key="1">
    <source>
        <dbReference type="HAMAP-Rule" id="MF_00015"/>
    </source>
</evidence>
<comment type="function">
    <text evidence="1">Represses a number of genes involved in the response to DNA damage (SOS response), including recA and lexA. In the presence of single-stranded DNA, RecA interacts with LexA causing an autocatalytic cleavage which disrupts the DNA-binding part of LexA, leading to derepression of the SOS regulon and eventually DNA repair.</text>
</comment>
<comment type="catalytic activity">
    <reaction evidence="1">
        <text>Hydrolysis of Ala-|-Gly bond in repressor LexA.</text>
        <dbReference type="EC" id="3.4.21.88"/>
    </reaction>
</comment>
<comment type="subunit">
    <text evidence="1">Homodimer.</text>
</comment>
<comment type="similarity">
    <text evidence="1">Belongs to the peptidase S24 family.</text>
</comment>
<protein>
    <recommendedName>
        <fullName evidence="1">LexA repressor</fullName>
        <ecNumber evidence="1">3.4.21.88</ecNumber>
    </recommendedName>
</protein>
<proteinExistence type="inferred from homology"/>
<reference key="1">
    <citation type="journal article" date="2008" name="PLoS Genet.">
        <title>Complete genome sequence of the complex carbohydrate-degrading marine bacterium, Saccharophagus degradans strain 2-40 T.</title>
        <authorList>
            <person name="Weiner R.M."/>
            <person name="Taylor L.E. II"/>
            <person name="Henrissat B."/>
            <person name="Hauser L."/>
            <person name="Land M."/>
            <person name="Coutinho P.M."/>
            <person name="Rancurel C."/>
            <person name="Saunders E.H."/>
            <person name="Longmire A.G."/>
            <person name="Zhang H."/>
            <person name="Bayer E.A."/>
            <person name="Gilbert H.J."/>
            <person name="Larimer F."/>
            <person name="Zhulin I.B."/>
            <person name="Ekborg N.A."/>
            <person name="Lamed R."/>
            <person name="Richardson P.M."/>
            <person name="Borovok I."/>
            <person name="Hutcheson S."/>
        </authorList>
    </citation>
    <scope>NUCLEOTIDE SEQUENCE [LARGE SCALE GENOMIC DNA]</scope>
    <source>
        <strain>2-40 / ATCC 43961 / DSM 17024</strain>
    </source>
</reference>
<organism>
    <name type="scientific">Saccharophagus degradans (strain 2-40 / ATCC 43961 / DSM 17024)</name>
    <dbReference type="NCBI Taxonomy" id="203122"/>
    <lineage>
        <taxon>Bacteria</taxon>
        <taxon>Pseudomonadati</taxon>
        <taxon>Pseudomonadota</taxon>
        <taxon>Gammaproteobacteria</taxon>
        <taxon>Cellvibrionales</taxon>
        <taxon>Cellvibrionaceae</taxon>
        <taxon>Saccharophagus</taxon>
    </lineage>
</organism>
<dbReference type="EC" id="3.4.21.88" evidence="1"/>
<dbReference type="EMBL" id="CP000282">
    <property type="protein sequence ID" value="ABD81047.1"/>
    <property type="molecule type" value="Genomic_DNA"/>
</dbReference>
<dbReference type="RefSeq" id="WP_011468267.1">
    <property type="nucleotide sequence ID" value="NC_007912.1"/>
</dbReference>
<dbReference type="SMR" id="Q21JT2"/>
<dbReference type="STRING" id="203122.Sde_1787"/>
<dbReference type="MEROPS" id="S24.001"/>
<dbReference type="GeneID" id="98613459"/>
<dbReference type="KEGG" id="sde:Sde_1787"/>
<dbReference type="eggNOG" id="COG1974">
    <property type="taxonomic scope" value="Bacteria"/>
</dbReference>
<dbReference type="HOGENOM" id="CLU_066192_45_3_6"/>
<dbReference type="OrthoDB" id="9802364at2"/>
<dbReference type="Proteomes" id="UP000001947">
    <property type="component" value="Chromosome"/>
</dbReference>
<dbReference type="GO" id="GO:0003677">
    <property type="term" value="F:DNA binding"/>
    <property type="evidence" value="ECO:0007669"/>
    <property type="project" value="UniProtKB-UniRule"/>
</dbReference>
<dbReference type="GO" id="GO:0004252">
    <property type="term" value="F:serine-type endopeptidase activity"/>
    <property type="evidence" value="ECO:0007669"/>
    <property type="project" value="UniProtKB-UniRule"/>
</dbReference>
<dbReference type="GO" id="GO:0006281">
    <property type="term" value="P:DNA repair"/>
    <property type="evidence" value="ECO:0007669"/>
    <property type="project" value="UniProtKB-UniRule"/>
</dbReference>
<dbReference type="GO" id="GO:0006260">
    <property type="term" value="P:DNA replication"/>
    <property type="evidence" value="ECO:0007669"/>
    <property type="project" value="UniProtKB-UniRule"/>
</dbReference>
<dbReference type="GO" id="GO:0045892">
    <property type="term" value="P:negative regulation of DNA-templated transcription"/>
    <property type="evidence" value="ECO:0007669"/>
    <property type="project" value="UniProtKB-UniRule"/>
</dbReference>
<dbReference type="GO" id="GO:0006508">
    <property type="term" value="P:proteolysis"/>
    <property type="evidence" value="ECO:0007669"/>
    <property type="project" value="InterPro"/>
</dbReference>
<dbReference type="GO" id="GO:0009432">
    <property type="term" value="P:SOS response"/>
    <property type="evidence" value="ECO:0007669"/>
    <property type="project" value="UniProtKB-UniRule"/>
</dbReference>
<dbReference type="CDD" id="cd06529">
    <property type="entry name" value="S24_LexA-like"/>
    <property type="match status" value="1"/>
</dbReference>
<dbReference type="FunFam" id="1.10.10.10:FF:000009">
    <property type="entry name" value="LexA repressor"/>
    <property type="match status" value="1"/>
</dbReference>
<dbReference type="FunFam" id="2.10.109.10:FF:000001">
    <property type="entry name" value="LexA repressor"/>
    <property type="match status" value="1"/>
</dbReference>
<dbReference type="Gene3D" id="2.10.109.10">
    <property type="entry name" value="Umud Fragment, subunit A"/>
    <property type="match status" value="1"/>
</dbReference>
<dbReference type="Gene3D" id="1.10.10.10">
    <property type="entry name" value="Winged helix-like DNA-binding domain superfamily/Winged helix DNA-binding domain"/>
    <property type="match status" value="1"/>
</dbReference>
<dbReference type="HAMAP" id="MF_00015">
    <property type="entry name" value="LexA"/>
    <property type="match status" value="1"/>
</dbReference>
<dbReference type="InterPro" id="IPR006200">
    <property type="entry name" value="LexA"/>
</dbReference>
<dbReference type="InterPro" id="IPR039418">
    <property type="entry name" value="LexA-like"/>
</dbReference>
<dbReference type="InterPro" id="IPR036286">
    <property type="entry name" value="LexA/Signal_pep-like_sf"/>
</dbReference>
<dbReference type="InterPro" id="IPR006199">
    <property type="entry name" value="LexA_DNA-bd_dom"/>
</dbReference>
<dbReference type="InterPro" id="IPR050077">
    <property type="entry name" value="LexA_repressor"/>
</dbReference>
<dbReference type="InterPro" id="IPR006197">
    <property type="entry name" value="Peptidase_S24_LexA"/>
</dbReference>
<dbReference type="InterPro" id="IPR015927">
    <property type="entry name" value="Peptidase_S24_S26A/B/C"/>
</dbReference>
<dbReference type="InterPro" id="IPR036388">
    <property type="entry name" value="WH-like_DNA-bd_sf"/>
</dbReference>
<dbReference type="InterPro" id="IPR036390">
    <property type="entry name" value="WH_DNA-bd_sf"/>
</dbReference>
<dbReference type="NCBIfam" id="TIGR00498">
    <property type="entry name" value="lexA"/>
    <property type="match status" value="1"/>
</dbReference>
<dbReference type="PANTHER" id="PTHR33516">
    <property type="entry name" value="LEXA REPRESSOR"/>
    <property type="match status" value="1"/>
</dbReference>
<dbReference type="PANTHER" id="PTHR33516:SF2">
    <property type="entry name" value="LEXA REPRESSOR-RELATED"/>
    <property type="match status" value="1"/>
</dbReference>
<dbReference type="Pfam" id="PF01726">
    <property type="entry name" value="LexA_DNA_bind"/>
    <property type="match status" value="1"/>
</dbReference>
<dbReference type="Pfam" id="PF00717">
    <property type="entry name" value="Peptidase_S24"/>
    <property type="match status" value="1"/>
</dbReference>
<dbReference type="PRINTS" id="PR00726">
    <property type="entry name" value="LEXASERPTASE"/>
</dbReference>
<dbReference type="SUPFAM" id="SSF51306">
    <property type="entry name" value="LexA/Signal peptidase"/>
    <property type="match status" value="1"/>
</dbReference>
<dbReference type="SUPFAM" id="SSF46785">
    <property type="entry name" value="Winged helix' DNA-binding domain"/>
    <property type="match status" value="1"/>
</dbReference>